<organism>
    <name type="scientific">Aeromonas salmonicida (strain A449)</name>
    <dbReference type="NCBI Taxonomy" id="382245"/>
    <lineage>
        <taxon>Bacteria</taxon>
        <taxon>Pseudomonadati</taxon>
        <taxon>Pseudomonadota</taxon>
        <taxon>Gammaproteobacteria</taxon>
        <taxon>Aeromonadales</taxon>
        <taxon>Aeromonadaceae</taxon>
        <taxon>Aeromonas</taxon>
    </lineage>
</organism>
<dbReference type="EC" id="2.4.2.4" evidence="1"/>
<dbReference type="EMBL" id="CP000644">
    <property type="protein sequence ID" value="ABO91615.1"/>
    <property type="molecule type" value="Genomic_DNA"/>
</dbReference>
<dbReference type="RefSeq" id="WP_005320414.1">
    <property type="nucleotide sequence ID" value="NC_009348.1"/>
</dbReference>
<dbReference type="SMR" id="A4SRU3"/>
<dbReference type="STRING" id="29491.GCA_000820065_02509"/>
<dbReference type="KEGG" id="asa:ASA_3654"/>
<dbReference type="eggNOG" id="COG0213">
    <property type="taxonomic scope" value="Bacteria"/>
</dbReference>
<dbReference type="HOGENOM" id="CLU_025040_0_1_6"/>
<dbReference type="UniPathway" id="UPA00578">
    <property type="reaction ID" value="UER00638"/>
</dbReference>
<dbReference type="Proteomes" id="UP000000225">
    <property type="component" value="Chromosome"/>
</dbReference>
<dbReference type="GO" id="GO:0005829">
    <property type="term" value="C:cytosol"/>
    <property type="evidence" value="ECO:0007669"/>
    <property type="project" value="TreeGrafter"/>
</dbReference>
<dbReference type="GO" id="GO:0004645">
    <property type="term" value="F:1,4-alpha-oligoglucan phosphorylase activity"/>
    <property type="evidence" value="ECO:0007669"/>
    <property type="project" value="InterPro"/>
</dbReference>
<dbReference type="GO" id="GO:0009032">
    <property type="term" value="F:thymidine phosphorylase activity"/>
    <property type="evidence" value="ECO:0007669"/>
    <property type="project" value="UniProtKB-UniRule"/>
</dbReference>
<dbReference type="GO" id="GO:0006206">
    <property type="term" value="P:pyrimidine nucleobase metabolic process"/>
    <property type="evidence" value="ECO:0007669"/>
    <property type="project" value="InterPro"/>
</dbReference>
<dbReference type="GO" id="GO:0046104">
    <property type="term" value="P:thymidine metabolic process"/>
    <property type="evidence" value="ECO:0007669"/>
    <property type="project" value="UniProtKB-UniRule"/>
</dbReference>
<dbReference type="FunFam" id="3.40.1030.10:FF:000001">
    <property type="entry name" value="Thymidine phosphorylase"/>
    <property type="match status" value="1"/>
</dbReference>
<dbReference type="FunFam" id="3.90.1170.30:FF:000001">
    <property type="entry name" value="Thymidine phosphorylase"/>
    <property type="match status" value="1"/>
</dbReference>
<dbReference type="Gene3D" id="3.40.1030.10">
    <property type="entry name" value="Nucleoside phosphorylase/phosphoribosyltransferase catalytic domain"/>
    <property type="match status" value="1"/>
</dbReference>
<dbReference type="Gene3D" id="3.90.1170.30">
    <property type="entry name" value="Pyrimidine nucleoside phosphorylase-like, C-terminal domain"/>
    <property type="match status" value="1"/>
</dbReference>
<dbReference type="Gene3D" id="1.20.970.10">
    <property type="entry name" value="Transferase, Pyrimidine Nucleoside Phosphorylase, Chain C"/>
    <property type="match status" value="1"/>
</dbReference>
<dbReference type="HAMAP" id="MF_01628">
    <property type="entry name" value="Thymid_phosp"/>
    <property type="match status" value="1"/>
</dbReference>
<dbReference type="InterPro" id="IPR000312">
    <property type="entry name" value="Glycosyl_Trfase_fam3"/>
</dbReference>
<dbReference type="InterPro" id="IPR017459">
    <property type="entry name" value="Glycosyl_Trfase_fam3_N_dom"/>
</dbReference>
<dbReference type="InterPro" id="IPR036320">
    <property type="entry name" value="Glycosyl_Trfase_fam3_N_dom_sf"/>
</dbReference>
<dbReference type="InterPro" id="IPR035902">
    <property type="entry name" value="Nuc_phospho_transferase"/>
</dbReference>
<dbReference type="InterPro" id="IPR036566">
    <property type="entry name" value="PYNP-like_C_sf"/>
</dbReference>
<dbReference type="InterPro" id="IPR013102">
    <property type="entry name" value="PYNP_C"/>
</dbReference>
<dbReference type="InterPro" id="IPR018090">
    <property type="entry name" value="Pyrmidine_PPas_bac/euk"/>
</dbReference>
<dbReference type="InterPro" id="IPR017872">
    <property type="entry name" value="Pyrmidine_PPase_CS"/>
</dbReference>
<dbReference type="InterPro" id="IPR000053">
    <property type="entry name" value="Thymidine/pyrmidine_PPase"/>
</dbReference>
<dbReference type="InterPro" id="IPR013465">
    <property type="entry name" value="Thymidine_Pase"/>
</dbReference>
<dbReference type="NCBIfam" id="NF004490">
    <property type="entry name" value="PRK05820.1"/>
    <property type="match status" value="1"/>
</dbReference>
<dbReference type="NCBIfam" id="TIGR02643">
    <property type="entry name" value="T_phosphoryl"/>
    <property type="match status" value="1"/>
</dbReference>
<dbReference type="NCBIfam" id="TIGR02644">
    <property type="entry name" value="Y_phosphoryl"/>
    <property type="match status" value="1"/>
</dbReference>
<dbReference type="PANTHER" id="PTHR10515">
    <property type="entry name" value="THYMIDINE PHOSPHORYLASE"/>
    <property type="match status" value="1"/>
</dbReference>
<dbReference type="PANTHER" id="PTHR10515:SF0">
    <property type="entry name" value="THYMIDINE PHOSPHORYLASE"/>
    <property type="match status" value="1"/>
</dbReference>
<dbReference type="Pfam" id="PF02885">
    <property type="entry name" value="Glycos_trans_3N"/>
    <property type="match status" value="1"/>
</dbReference>
<dbReference type="Pfam" id="PF00591">
    <property type="entry name" value="Glycos_transf_3"/>
    <property type="match status" value="1"/>
</dbReference>
<dbReference type="Pfam" id="PF07831">
    <property type="entry name" value="PYNP_C"/>
    <property type="match status" value="1"/>
</dbReference>
<dbReference type="PIRSF" id="PIRSF000478">
    <property type="entry name" value="TP_PyNP"/>
    <property type="match status" value="1"/>
</dbReference>
<dbReference type="SMART" id="SM00941">
    <property type="entry name" value="PYNP_C"/>
    <property type="match status" value="1"/>
</dbReference>
<dbReference type="SUPFAM" id="SSF52418">
    <property type="entry name" value="Nucleoside phosphorylase/phosphoribosyltransferase catalytic domain"/>
    <property type="match status" value="1"/>
</dbReference>
<dbReference type="SUPFAM" id="SSF47648">
    <property type="entry name" value="Nucleoside phosphorylase/phosphoribosyltransferase N-terminal domain"/>
    <property type="match status" value="1"/>
</dbReference>
<dbReference type="SUPFAM" id="SSF54680">
    <property type="entry name" value="Pyrimidine nucleoside phosphorylase C-terminal domain"/>
    <property type="match status" value="1"/>
</dbReference>
<dbReference type="PROSITE" id="PS00647">
    <property type="entry name" value="THYMID_PHOSPHORYLASE"/>
    <property type="match status" value="1"/>
</dbReference>
<comment type="function">
    <text evidence="1">The enzymes which catalyze the reversible phosphorolysis of pyrimidine nucleosides are involved in the degradation of these compounds and in their utilization as carbon and energy sources, or in the rescue of pyrimidine bases for nucleotide synthesis.</text>
</comment>
<comment type="catalytic activity">
    <reaction evidence="1">
        <text>thymidine + phosphate = 2-deoxy-alpha-D-ribose 1-phosphate + thymine</text>
        <dbReference type="Rhea" id="RHEA:16037"/>
        <dbReference type="ChEBI" id="CHEBI:17748"/>
        <dbReference type="ChEBI" id="CHEBI:17821"/>
        <dbReference type="ChEBI" id="CHEBI:43474"/>
        <dbReference type="ChEBI" id="CHEBI:57259"/>
        <dbReference type="EC" id="2.4.2.4"/>
    </reaction>
</comment>
<comment type="pathway">
    <text evidence="1">Pyrimidine metabolism; dTMP biosynthesis via salvage pathway; dTMP from thymine: step 1/2.</text>
</comment>
<comment type="subunit">
    <text evidence="1">Homodimer.</text>
</comment>
<comment type="similarity">
    <text evidence="1">Belongs to the thymidine/pyrimidine-nucleoside phosphorylase family.</text>
</comment>
<feature type="chain" id="PRO_1000069655" description="Thymidine phosphorylase">
    <location>
        <begin position="1"/>
        <end position="443"/>
    </location>
</feature>
<accession>A4SRU3</accession>
<reference key="1">
    <citation type="journal article" date="2008" name="BMC Genomics">
        <title>The genome of Aeromonas salmonicida subsp. salmonicida A449: insights into the evolution of a fish pathogen.</title>
        <authorList>
            <person name="Reith M.E."/>
            <person name="Singh R.K."/>
            <person name="Curtis B."/>
            <person name="Boyd J.M."/>
            <person name="Bouevitch A."/>
            <person name="Kimball J."/>
            <person name="Munholland J."/>
            <person name="Murphy C."/>
            <person name="Sarty D."/>
            <person name="Williams J."/>
            <person name="Nash J.H."/>
            <person name="Johnson S.C."/>
            <person name="Brown L.L."/>
        </authorList>
    </citation>
    <scope>NUCLEOTIDE SEQUENCE [LARGE SCALE GENOMIC DNA]</scope>
    <source>
        <strain>A449</strain>
    </source>
</reference>
<name>TYPH_AERS4</name>
<evidence type="ECO:0000255" key="1">
    <source>
        <dbReference type="HAMAP-Rule" id="MF_01628"/>
    </source>
</evidence>
<gene>
    <name evidence="1" type="primary">deoA</name>
    <name type="ordered locus">ASA_3654</name>
</gene>
<sequence>MFLPQEIIRKKRNGEALSTQEIQFFVQGITNNTIGEGQIAALAMAVYFKDMTMDERVALTCAMRDSGMVLNWEHLNLGGPIVDKHSTGGVGDVVSLMLGPMVAACGGFVPMISGRGLGHTGGTLDKLDAIPGYQTSVDNDRFLKVVKEAGVAIIGQTGDLAPADKRIYAVRDITATVESIAMITGSILSKKLASGLEALVMDVKVGSGAFMPTFEASEELAKSIVAVANGAGCRTSALLTDMNQVLASSAGNGVEVREAVRYLTGEYRNPRIHEVTMSLCAEMLISAHLASDDADARRKLQAVLDNGKAAEIFGRMVTGLGGPSDFMERYDSYLPKAAIVRPVYAANAGFVTAMDTRELGLAVVAMGGGRRAAGDKLDYAVGLTDFIRLGQSVDADKPLALIHAQTEDQFAQAASMVQAAVKIGDTQPQALPEVYRRIGLADL</sequence>
<proteinExistence type="inferred from homology"/>
<protein>
    <recommendedName>
        <fullName evidence="1">Thymidine phosphorylase</fullName>
        <ecNumber evidence="1">2.4.2.4</ecNumber>
    </recommendedName>
    <alternativeName>
        <fullName evidence="1">TdRPase</fullName>
    </alternativeName>
</protein>
<keyword id="KW-0328">Glycosyltransferase</keyword>
<keyword id="KW-0808">Transferase</keyword>